<feature type="chain" id="PRO_0000082867" description="Peptide deformylase">
    <location>
        <begin position="1"/>
        <end position="192"/>
    </location>
</feature>
<feature type="active site" evidence="1">
    <location>
        <position position="146"/>
    </location>
</feature>
<feature type="binding site" evidence="1">
    <location>
        <position position="102"/>
    </location>
    <ligand>
        <name>Fe cation</name>
        <dbReference type="ChEBI" id="CHEBI:24875"/>
    </ligand>
</feature>
<feature type="binding site" evidence="1">
    <location>
        <position position="145"/>
    </location>
    <ligand>
        <name>Fe cation</name>
        <dbReference type="ChEBI" id="CHEBI:24875"/>
    </ligand>
</feature>
<feature type="binding site" evidence="1">
    <location>
        <position position="149"/>
    </location>
    <ligand>
        <name>Fe cation</name>
        <dbReference type="ChEBI" id="CHEBI:24875"/>
    </ligand>
</feature>
<feature type="helix" evidence="2">
    <location>
        <begin position="11"/>
        <end position="14"/>
    </location>
</feature>
<feature type="helix" evidence="2">
    <location>
        <begin position="26"/>
        <end position="39"/>
    </location>
</feature>
<feature type="strand" evidence="2">
    <location>
        <begin position="43"/>
        <end position="46"/>
    </location>
</feature>
<feature type="helix" evidence="2">
    <location>
        <begin position="47"/>
        <end position="50"/>
    </location>
</feature>
<feature type="strand" evidence="2">
    <location>
        <begin position="54"/>
        <end position="60"/>
    </location>
</feature>
<feature type="turn" evidence="2">
    <location>
        <begin position="75"/>
        <end position="77"/>
    </location>
</feature>
<feature type="strand" evidence="2">
    <location>
        <begin position="81"/>
        <end position="93"/>
    </location>
</feature>
<feature type="strand" evidence="2">
    <location>
        <begin position="96"/>
        <end position="100"/>
    </location>
</feature>
<feature type="strand" evidence="2">
    <location>
        <begin position="110"/>
        <end position="115"/>
    </location>
</feature>
<feature type="strand" evidence="2">
    <location>
        <begin position="117"/>
        <end position="124"/>
    </location>
</feature>
<feature type="strand" evidence="2">
    <location>
        <begin position="130"/>
        <end position="136"/>
    </location>
</feature>
<feature type="helix" evidence="2">
    <location>
        <begin position="137"/>
        <end position="150"/>
    </location>
</feature>
<feature type="helix" evidence="2">
    <location>
        <begin position="155"/>
        <end position="158"/>
    </location>
</feature>
<feature type="helix" evidence="2">
    <location>
        <begin position="161"/>
        <end position="170"/>
    </location>
</feature>
<feature type="helix" evidence="2">
    <location>
        <begin position="172"/>
        <end position="181"/>
    </location>
</feature>
<keyword id="KW-0002">3D-structure</keyword>
<keyword id="KW-0378">Hydrolase</keyword>
<keyword id="KW-0408">Iron</keyword>
<keyword id="KW-0479">Metal-binding</keyword>
<keyword id="KW-0648">Protein biosynthesis</keyword>
<comment type="function">
    <text evidence="1">Removes the formyl group from the N-terminal Met of newly synthesized proteins. Requires at least a dipeptide for an efficient rate of reaction. N-terminal L-methionine is a prerequisite for activity but the enzyme has broad specificity at other positions.</text>
</comment>
<comment type="catalytic activity">
    <reaction evidence="1">
        <text>N-terminal N-formyl-L-methionyl-[peptide] + H2O = N-terminal L-methionyl-[peptide] + formate</text>
        <dbReference type="Rhea" id="RHEA:24420"/>
        <dbReference type="Rhea" id="RHEA-COMP:10639"/>
        <dbReference type="Rhea" id="RHEA-COMP:10640"/>
        <dbReference type="ChEBI" id="CHEBI:15377"/>
        <dbReference type="ChEBI" id="CHEBI:15740"/>
        <dbReference type="ChEBI" id="CHEBI:49298"/>
        <dbReference type="ChEBI" id="CHEBI:64731"/>
        <dbReference type="EC" id="3.5.1.88"/>
    </reaction>
</comment>
<comment type="cofactor">
    <cofactor evidence="1">
        <name>Fe(2+)</name>
        <dbReference type="ChEBI" id="CHEBI:29033"/>
    </cofactor>
    <text evidence="1">Binds 1 Fe(2+) ion.</text>
</comment>
<comment type="similarity">
    <text evidence="1">Belongs to the polypeptide deformylase family.</text>
</comment>
<evidence type="ECO:0000255" key="1">
    <source>
        <dbReference type="HAMAP-Rule" id="MF_00163"/>
    </source>
</evidence>
<evidence type="ECO:0007829" key="2">
    <source>
        <dbReference type="PDB" id="1V3Y"/>
    </source>
</evidence>
<sequence length="192" mass="22092">MVYPIRLYGDPVLRRKARPVEDFSGIKRLAEDMLETMFEAKGVGLAAPQIGLSQRLFVAVEYADEPEGEEERPLRELVRRVYVVANPVITYREGLVEGTEGCLSLPGLYSEEVPRAERIRVEYQDEEGRGRVLELEGYMARVFQHEIDHLDGILFFERLPKPKREAFLEANRAELVRFQKEARALLKELSQG</sequence>
<organism>
    <name type="scientific">Thermus thermophilus</name>
    <dbReference type="NCBI Taxonomy" id="274"/>
    <lineage>
        <taxon>Bacteria</taxon>
        <taxon>Thermotogati</taxon>
        <taxon>Deinococcota</taxon>
        <taxon>Deinococci</taxon>
        <taxon>Thermales</taxon>
        <taxon>Thermaceae</taxon>
        <taxon>Thermus</taxon>
    </lineage>
</organism>
<gene>
    <name evidence="1" type="primary">def</name>
</gene>
<protein>
    <recommendedName>
        <fullName evidence="1">Peptide deformylase</fullName>
        <shortName evidence="1">PDF</shortName>
        <ecNumber evidence="1">3.5.1.88</ecNumber>
    </recommendedName>
    <alternativeName>
        <fullName evidence="1">Polypeptide deformylase</fullName>
    </alternativeName>
</protein>
<proteinExistence type="evidence at protein level"/>
<accession>P43522</accession>
<name>DEF_THETH</name>
<dbReference type="EC" id="3.5.1.88" evidence="1"/>
<dbReference type="EMBL" id="X79087">
    <property type="protein sequence ID" value="CAA55695.1"/>
    <property type="molecule type" value="Genomic_DNA"/>
</dbReference>
<dbReference type="RefSeq" id="WP_011174028.1">
    <property type="nucleotide sequence ID" value="NZ_DFSU01000087.1"/>
</dbReference>
<dbReference type="PDB" id="1V3Y">
    <property type="method" value="X-ray"/>
    <property type="resolution" value="1.81 A"/>
    <property type="chains" value="A/B=1-192"/>
</dbReference>
<dbReference type="PDBsum" id="1V3Y"/>
<dbReference type="SMR" id="P43522"/>
<dbReference type="DrugBank" id="DB03661">
    <property type="generic name" value="L-cysteic acid"/>
</dbReference>
<dbReference type="GeneID" id="3169711"/>
<dbReference type="OMA" id="VCIQHEI"/>
<dbReference type="EvolutionaryTrace" id="P43522"/>
<dbReference type="GO" id="GO:0046872">
    <property type="term" value="F:metal ion binding"/>
    <property type="evidence" value="ECO:0007669"/>
    <property type="project" value="UniProtKB-KW"/>
</dbReference>
<dbReference type="GO" id="GO:0042586">
    <property type="term" value="F:peptide deformylase activity"/>
    <property type="evidence" value="ECO:0007669"/>
    <property type="project" value="UniProtKB-UniRule"/>
</dbReference>
<dbReference type="GO" id="GO:0043686">
    <property type="term" value="P:co-translational protein modification"/>
    <property type="evidence" value="ECO:0007669"/>
    <property type="project" value="TreeGrafter"/>
</dbReference>
<dbReference type="GO" id="GO:0006412">
    <property type="term" value="P:translation"/>
    <property type="evidence" value="ECO:0007669"/>
    <property type="project" value="UniProtKB-UniRule"/>
</dbReference>
<dbReference type="CDD" id="cd00487">
    <property type="entry name" value="Pep_deformylase"/>
    <property type="match status" value="1"/>
</dbReference>
<dbReference type="Gene3D" id="3.90.45.10">
    <property type="entry name" value="Peptide deformylase"/>
    <property type="match status" value="1"/>
</dbReference>
<dbReference type="HAMAP" id="MF_00163">
    <property type="entry name" value="Pep_deformylase"/>
    <property type="match status" value="1"/>
</dbReference>
<dbReference type="InterPro" id="IPR023635">
    <property type="entry name" value="Peptide_deformylase"/>
</dbReference>
<dbReference type="InterPro" id="IPR036821">
    <property type="entry name" value="Peptide_deformylase_sf"/>
</dbReference>
<dbReference type="NCBIfam" id="TIGR00079">
    <property type="entry name" value="pept_deformyl"/>
    <property type="match status" value="1"/>
</dbReference>
<dbReference type="NCBIfam" id="NF001159">
    <property type="entry name" value="PRK00150.1-3"/>
    <property type="match status" value="1"/>
</dbReference>
<dbReference type="PANTHER" id="PTHR10458">
    <property type="entry name" value="PEPTIDE DEFORMYLASE"/>
    <property type="match status" value="1"/>
</dbReference>
<dbReference type="PANTHER" id="PTHR10458:SF22">
    <property type="entry name" value="PEPTIDE DEFORMYLASE"/>
    <property type="match status" value="1"/>
</dbReference>
<dbReference type="Pfam" id="PF01327">
    <property type="entry name" value="Pep_deformylase"/>
    <property type="match status" value="1"/>
</dbReference>
<dbReference type="PIRSF" id="PIRSF004749">
    <property type="entry name" value="Pep_def"/>
    <property type="match status" value="1"/>
</dbReference>
<dbReference type="PRINTS" id="PR01576">
    <property type="entry name" value="PDEFORMYLASE"/>
</dbReference>
<dbReference type="SUPFAM" id="SSF56420">
    <property type="entry name" value="Peptide deformylase"/>
    <property type="match status" value="1"/>
</dbReference>
<reference key="1">
    <citation type="journal article" date="1994" name="J. Bacteriol.">
        <title>Characterization of the Thermus thermophilus locus encoding peptide deformylase and methionyl-tRNA(fMet) formyltransferase.</title>
        <authorList>
            <person name="Meinnel T."/>
            <person name="Blanquet S."/>
        </authorList>
    </citation>
    <scope>NUCLEOTIDE SEQUENCE [GENOMIC DNA]</scope>
    <source>
        <strain>VK1</strain>
    </source>
</reference>
<reference key="2">
    <citation type="journal article" date="1997" name="J. Mol. Biol.">
        <title>Structure-function relationships within the peptide deformylase family. Evidence for a conserved architecture of the active site involving three conserved motifs and a metal ion.</title>
        <authorList>
            <person name="Meinnel T."/>
            <person name="Lazennec C."/>
            <person name="Villoing S."/>
            <person name="Blanquet S."/>
        </authorList>
    </citation>
    <scope>CHARACTERIZATION</scope>
</reference>